<reference key="1">
    <citation type="journal article" date="2005" name="Nature">
        <title>The genome of the social amoeba Dictyostelium discoideum.</title>
        <authorList>
            <person name="Eichinger L."/>
            <person name="Pachebat J.A."/>
            <person name="Gloeckner G."/>
            <person name="Rajandream M.A."/>
            <person name="Sucgang R."/>
            <person name="Berriman M."/>
            <person name="Song J."/>
            <person name="Olsen R."/>
            <person name="Szafranski K."/>
            <person name="Xu Q."/>
            <person name="Tunggal B."/>
            <person name="Kummerfeld S."/>
            <person name="Madera M."/>
            <person name="Konfortov B.A."/>
            <person name="Rivero F."/>
            <person name="Bankier A.T."/>
            <person name="Lehmann R."/>
            <person name="Hamlin N."/>
            <person name="Davies R."/>
            <person name="Gaudet P."/>
            <person name="Fey P."/>
            <person name="Pilcher K."/>
            <person name="Chen G."/>
            <person name="Saunders D."/>
            <person name="Sodergren E.J."/>
            <person name="Davis P."/>
            <person name="Kerhornou A."/>
            <person name="Nie X."/>
            <person name="Hall N."/>
            <person name="Anjard C."/>
            <person name="Hemphill L."/>
            <person name="Bason N."/>
            <person name="Farbrother P."/>
            <person name="Desany B."/>
            <person name="Just E."/>
            <person name="Morio T."/>
            <person name="Rost R."/>
            <person name="Churcher C.M."/>
            <person name="Cooper J."/>
            <person name="Haydock S."/>
            <person name="van Driessche N."/>
            <person name="Cronin A."/>
            <person name="Goodhead I."/>
            <person name="Muzny D.M."/>
            <person name="Mourier T."/>
            <person name="Pain A."/>
            <person name="Lu M."/>
            <person name="Harper D."/>
            <person name="Lindsay R."/>
            <person name="Hauser H."/>
            <person name="James K.D."/>
            <person name="Quiles M."/>
            <person name="Madan Babu M."/>
            <person name="Saito T."/>
            <person name="Buchrieser C."/>
            <person name="Wardroper A."/>
            <person name="Felder M."/>
            <person name="Thangavelu M."/>
            <person name="Johnson D."/>
            <person name="Knights A."/>
            <person name="Loulseged H."/>
            <person name="Mungall K.L."/>
            <person name="Oliver K."/>
            <person name="Price C."/>
            <person name="Quail M.A."/>
            <person name="Urushihara H."/>
            <person name="Hernandez J."/>
            <person name="Rabbinowitsch E."/>
            <person name="Steffen D."/>
            <person name="Sanders M."/>
            <person name="Ma J."/>
            <person name="Kohara Y."/>
            <person name="Sharp S."/>
            <person name="Simmonds M.N."/>
            <person name="Spiegler S."/>
            <person name="Tivey A."/>
            <person name="Sugano S."/>
            <person name="White B."/>
            <person name="Walker D."/>
            <person name="Woodward J.R."/>
            <person name="Winckler T."/>
            <person name="Tanaka Y."/>
            <person name="Shaulsky G."/>
            <person name="Schleicher M."/>
            <person name="Weinstock G.M."/>
            <person name="Rosenthal A."/>
            <person name="Cox E.C."/>
            <person name="Chisholm R.L."/>
            <person name="Gibbs R.A."/>
            <person name="Loomis W.F."/>
            <person name="Platzer M."/>
            <person name="Kay R.R."/>
            <person name="Williams J.G."/>
            <person name="Dear P.H."/>
            <person name="Noegel A.A."/>
            <person name="Barrell B.G."/>
            <person name="Kuspa A."/>
        </authorList>
    </citation>
    <scope>NUCLEOTIDE SEQUENCE [LARGE SCALE GENOMIC DNA]</scope>
    <source>
        <strain>AX4</strain>
    </source>
</reference>
<proteinExistence type="inferred from homology"/>
<evidence type="ECO:0000250" key="1"/>
<evidence type="ECO:0000305" key="2"/>
<comment type="function">
    <text evidence="1">The protein was found to bind to both initiator and elongator tRNAs and consequently was assigned to the P site or P and A site.</text>
</comment>
<comment type="similarity">
    <text evidence="2">Belongs to the eukaryotic ribosomal protein eL33 family.</text>
</comment>
<sequence length="105" mass="11541">MEKIYSKGVVLGYRRSQATQYPNISLIKIEGVVSREDSTFYLGKKVCLVSKVSKSAKNPTGHKISWGKICKTHGSSGVVQARFARNLPPKAMGAPVRVMLYPSNI</sequence>
<organism>
    <name type="scientific">Dictyostelium discoideum</name>
    <name type="common">Social amoeba</name>
    <dbReference type="NCBI Taxonomy" id="44689"/>
    <lineage>
        <taxon>Eukaryota</taxon>
        <taxon>Amoebozoa</taxon>
        <taxon>Evosea</taxon>
        <taxon>Eumycetozoa</taxon>
        <taxon>Dictyostelia</taxon>
        <taxon>Dictyosteliales</taxon>
        <taxon>Dictyosteliaceae</taxon>
        <taxon>Dictyostelium</taxon>
    </lineage>
</organism>
<accession>Q55BN7</accession>
<protein>
    <recommendedName>
        <fullName evidence="2">Large ribosomal subunit protein eL33</fullName>
    </recommendedName>
    <alternativeName>
        <fullName>60S ribosomal protein L35a</fullName>
    </alternativeName>
</protein>
<gene>
    <name type="primary">rpl35a</name>
    <name type="ORF">DDB_G0270424</name>
</gene>
<name>RL35A_DICDI</name>
<keyword id="KW-1185">Reference proteome</keyword>
<keyword id="KW-0687">Ribonucleoprotein</keyword>
<keyword id="KW-0689">Ribosomal protein</keyword>
<keyword id="KW-0694">RNA-binding</keyword>
<keyword id="KW-0820">tRNA-binding</keyword>
<feature type="chain" id="PRO_0000320044" description="Large ribosomal subunit protein eL33">
    <location>
        <begin position="1"/>
        <end position="105"/>
    </location>
</feature>
<dbReference type="EMBL" id="AAFI02000005">
    <property type="protein sequence ID" value="EAL72562.1"/>
    <property type="molecule type" value="Genomic_DNA"/>
</dbReference>
<dbReference type="RefSeq" id="XP_646794.1">
    <property type="nucleotide sequence ID" value="XM_641702.1"/>
</dbReference>
<dbReference type="SMR" id="Q55BN7"/>
<dbReference type="FunCoup" id="Q55BN7">
    <property type="interactions" value="385"/>
</dbReference>
<dbReference type="STRING" id="44689.Q55BN7"/>
<dbReference type="PaxDb" id="44689-DDB0231153"/>
<dbReference type="EnsemblProtists" id="EAL72562">
    <property type="protein sequence ID" value="EAL72562"/>
    <property type="gene ID" value="DDB_G0270424"/>
</dbReference>
<dbReference type="GeneID" id="8617767"/>
<dbReference type="KEGG" id="ddi:DDB_G0270424"/>
<dbReference type="dictyBase" id="DDB_G0270424">
    <property type="gene designation" value="rpl35a"/>
</dbReference>
<dbReference type="VEuPathDB" id="AmoebaDB:DDB_G0270424"/>
<dbReference type="eggNOG" id="KOG0887">
    <property type="taxonomic scope" value="Eukaryota"/>
</dbReference>
<dbReference type="HOGENOM" id="CLU_100745_2_0_1"/>
<dbReference type="InParanoid" id="Q55BN7"/>
<dbReference type="OMA" id="YRTNKHH"/>
<dbReference type="PhylomeDB" id="Q55BN7"/>
<dbReference type="Reactome" id="R-DDI-156827">
    <property type="pathway name" value="L13a-mediated translational silencing of Ceruloplasmin expression"/>
</dbReference>
<dbReference type="Reactome" id="R-DDI-1799339">
    <property type="pathway name" value="SRP-dependent cotranslational protein targeting to membrane"/>
</dbReference>
<dbReference type="Reactome" id="R-DDI-72689">
    <property type="pathway name" value="Formation of a pool of free 40S subunits"/>
</dbReference>
<dbReference type="Reactome" id="R-DDI-72706">
    <property type="pathway name" value="GTP hydrolysis and joining of the 60S ribosomal subunit"/>
</dbReference>
<dbReference type="Reactome" id="R-DDI-975956">
    <property type="pathway name" value="Nonsense Mediated Decay (NMD) independent of the Exon Junction Complex (EJC)"/>
</dbReference>
<dbReference type="Reactome" id="R-DDI-975957">
    <property type="pathway name" value="Nonsense Mediated Decay (NMD) enhanced by the Exon Junction Complex (EJC)"/>
</dbReference>
<dbReference type="PRO" id="PR:Q55BN7"/>
<dbReference type="Proteomes" id="UP000002195">
    <property type="component" value="Chromosome 1"/>
</dbReference>
<dbReference type="GO" id="GO:0022625">
    <property type="term" value="C:cytosolic large ribosomal subunit"/>
    <property type="evidence" value="ECO:0000318"/>
    <property type="project" value="GO_Central"/>
</dbReference>
<dbReference type="GO" id="GO:0031012">
    <property type="term" value="C:extracellular matrix"/>
    <property type="evidence" value="ECO:0007005"/>
    <property type="project" value="dictyBase"/>
</dbReference>
<dbReference type="GO" id="GO:0003735">
    <property type="term" value="F:structural constituent of ribosome"/>
    <property type="evidence" value="ECO:0000250"/>
    <property type="project" value="dictyBase"/>
</dbReference>
<dbReference type="GO" id="GO:0000049">
    <property type="term" value="F:tRNA binding"/>
    <property type="evidence" value="ECO:0007669"/>
    <property type="project" value="UniProtKB-KW"/>
</dbReference>
<dbReference type="GO" id="GO:0002181">
    <property type="term" value="P:cytoplasmic translation"/>
    <property type="evidence" value="ECO:0000318"/>
    <property type="project" value="GO_Central"/>
</dbReference>
<dbReference type="GO" id="GO:0042273">
    <property type="term" value="P:ribosomal large subunit biogenesis"/>
    <property type="evidence" value="ECO:0000318"/>
    <property type="project" value="GO_Central"/>
</dbReference>
<dbReference type="GO" id="GO:0006412">
    <property type="term" value="P:translation"/>
    <property type="evidence" value="ECO:0000250"/>
    <property type="project" value="dictyBase"/>
</dbReference>
<dbReference type="FunFam" id="2.40.10.190:FF:000001">
    <property type="entry name" value="60S ribosomal protein L35a"/>
    <property type="match status" value="1"/>
</dbReference>
<dbReference type="Gene3D" id="2.40.10.190">
    <property type="entry name" value="translation elongation factor selb, chain A, domain 4"/>
    <property type="match status" value="1"/>
</dbReference>
<dbReference type="HAMAP" id="MF_00573">
    <property type="entry name" value="Ribosomal_eL33"/>
    <property type="match status" value="1"/>
</dbReference>
<dbReference type="InterPro" id="IPR001780">
    <property type="entry name" value="Ribosomal_eL33"/>
</dbReference>
<dbReference type="InterPro" id="IPR038661">
    <property type="entry name" value="Ribosomal_eL33_sf"/>
</dbReference>
<dbReference type="InterPro" id="IPR009000">
    <property type="entry name" value="Transl_B-barrel_sf"/>
</dbReference>
<dbReference type="PANTHER" id="PTHR10902">
    <property type="entry name" value="60S RIBOSOMAL PROTEIN L35A"/>
    <property type="match status" value="1"/>
</dbReference>
<dbReference type="Pfam" id="PF01247">
    <property type="entry name" value="Ribosomal_L35Ae"/>
    <property type="match status" value="1"/>
</dbReference>
<dbReference type="SUPFAM" id="SSF50447">
    <property type="entry name" value="Translation proteins"/>
    <property type="match status" value="1"/>
</dbReference>